<feature type="chain" id="PRO_0000381013" description="8-amino-7-oxononanoate synthase">
    <location>
        <begin position="1"/>
        <end position="385"/>
    </location>
</feature>
<feature type="binding site" evidence="1">
    <location>
        <position position="21"/>
    </location>
    <ligand>
        <name>substrate</name>
    </ligand>
</feature>
<feature type="binding site" evidence="1">
    <location>
        <begin position="108"/>
        <end position="109"/>
    </location>
    <ligand>
        <name>pyridoxal 5'-phosphate</name>
        <dbReference type="ChEBI" id="CHEBI:597326"/>
    </ligand>
</feature>
<feature type="binding site" evidence="1">
    <location>
        <position position="133"/>
    </location>
    <ligand>
        <name>substrate</name>
    </ligand>
</feature>
<feature type="binding site" evidence="1">
    <location>
        <position position="179"/>
    </location>
    <ligand>
        <name>pyridoxal 5'-phosphate</name>
        <dbReference type="ChEBI" id="CHEBI:597326"/>
    </ligand>
</feature>
<feature type="binding site" evidence="1">
    <location>
        <position position="207"/>
    </location>
    <ligand>
        <name>pyridoxal 5'-phosphate</name>
        <dbReference type="ChEBI" id="CHEBI:597326"/>
    </ligand>
</feature>
<feature type="binding site" evidence="1">
    <location>
        <position position="233"/>
    </location>
    <ligand>
        <name>pyridoxal 5'-phosphate</name>
        <dbReference type="ChEBI" id="CHEBI:597326"/>
    </ligand>
</feature>
<feature type="binding site" evidence="1">
    <location>
        <position position="352"/>
    </location>
    <ligand>
        <name>substrate</name>
    </ligand>
</feature>
<feature type="modified residue" description="N6-(pyridoxal phosphate)lysine" evidence="1">
    <location>
        <position position="236"/>
    </location>
</feature>
<sequence>MSWQQRIDRALDERRAAEAFRRRLPVTHGAGRWLEREGERWLNFSSNDYLGLSQHPAIIAAWQQGATRYGVGAGGSGHVSGYSEAHRALEEALADWLGYPRALLFISGFAANQALIAALAEKDDRIVADRLSHASLLEAASLSPAQLRRFTHNDPQQLAQLLAKPLAGEQLAVTEGIFSMDGDSAPLAAIHAATQAAGAVLLVDDAHGVGVIGDEGRGSCAAQAVRPELLVVTFGKAFGVSGAAVLCDEAMADYLLQFARHLIYSTAMPPAQAVALSAALRIIRSDEGQQRRDILAARIRQFREGMGEVSLGLTDSVSAIQPLIVGDNARALNLACRLRDAGCWATAIRPPTVPVGSARLRLTLTAAHHTEDINRLLEVLHGHSE</sequence>
<keyword id="KW-0093">Biotin biosynthesis</keyword>
<keyword id="KW-0663">Pyridoxal phosphate</keyword>
<keyword id="KW-0808">Transferase</keyword>
<gene>
    <name evidence="1" type="primary">bioF</name>
    <name type="ordered locus">KPN78578_07760</name>
    <name type="ORF">KPN_00801</name>
</gene>
<name>BIOF_KLEP7</name>
<evidence type="ECO:0000255" key="1">
    <source>
        <dbReference type="HAMAP-Rule" id="MF_01693"/>
    </source>
</evidence>
<reference key="1">
    <citation type="submission" date="2006-09" db="EMBL/GenBank/DDBJ databases">
        <authorList>
            <consortium name="The Klebsiella pneumonia Genome Sequencing Project"/>
            <person name="McClelland M."/>
            <person name="Sanderson E.K."/>
            <person name="Spieth J."/>
            <person name="Clifton W.S."/>
            <person name="Latreille P."/>
            <person name="Sabo A."/>
            <person name="Pepin K."/>
            <person name="Bhonagiri V."/>
            <person name="Porwollik S."/>
            <person name="Ali J."/>
            <person name="Wilson R.K."/>
        </authorList>
    </citation>
    <scope>NUCLEOTIDE SEQUENCE [LARGE SCALE GENOMIC DNA]</scope>
    <source>
        <strain>ATCC 700721 / MGH 78578</strain>
    </source>
</reference>
<dbReference type="EC" id="2.3.1.47" evidence="1"/>
<dbReference type="EMBL" id="CP000647">
    <property type="protein sequence ID" value="ABR76237.1"/>
    <property type="molecule type" value="Genomic_DNA"/>
</dbReference>
<dbReference type="RefSeq" id="WP_012068476.1">
    <property type="nucleotide sequence ID" value="NC_009648.1"/>
</dbReference>
<dbReference type="SMR" id="A6T6L6"/>
<dbReference type="STRING" id="272620.KPN_00801"/>
<dbReference type="PaxDb" id="272620-KPN_00801"/>
<dbReference type="EnsemblBacteria" id="ABR76237">
    <property type="protein sequence ID" value="ABR76237"/>
    <property type="gene ID" value="KPN_00801"/>
</dbReference>
<dbReference type="KEGG" id="kpn:KPN_00801"/>
<dbReference type="HOGENOM" id="CLU_015846_11_2_6"/>
<dbReference type="UniPathway" id="UPA00078"/>
<dbReference type="Proteomes" id="UP000000265">
    <property type="component" value="Chromosome"/>
</dbReference>
<dbReference type="GO" id="GO:0008710">
    <property type="term" value="F:8-amino-7-oxononanoate synthase activity"/>
    <property type="evidence" value="ECO:0007669"/>
    <property type="project" value="UniProtKB-UniRule"/>
</dbReference>
<dbReference type="GO" id="GO:0030170">
    <property type="term" value="F:pyridoxal phosphate binding"/>
    <property type="evidence" value="ECO:0007669"/>
    <property type="project" value="UniProtKB-UniRule"/>
</dbReference>
<dbReference type="GO" id="GO:0009102">
    <property type="term" value="P:biotin biosynthetic process"/>
    <property type="evidence" value="ECO:0007669"/>
    <property type="project" value="UniProtKB-UniRule"/>
</dbReference>
<dbReference type="CDD" id="cd06454">
    <property type="entry name" value="KBL_like"/>
    <property type="match status" value="1"/>
</dbReference>
<dbReference type="Gene3D" id="3.90.1150.10">
    <property type="entry name" value="Aspartate Aminotransferase, domain 1"/>
    <property type="match status" value="1"/>
</dbReference>
<dbReference type="Gene3D" id="3.40.640.10">
    <property type="entry name" value="Type I PLP-dependent aspartate aminotransferase-like (Major domain)"/>
    <property type="match status" value="1"/>
</dbReference>
<dbReference type="HAMAP" id="MF_01693">
    <property type="entry name" value="BioF_aminotrans_2"/>
    <property type="match status" value="1"/>
</dbReference>
<dbReference type="InterPro" id="IPR001917">
    <property type="entry name" value="Aminotrans_II_pyridoxalP_BS"/>
</dbReference>
<dbReference type="InterPro" id="IPR004839">
    <property type="entry name" value="Aminotransferase_I/II_large"/>
</dbReference>
<dbReference type="InterPro" id="IPR050087">
    <property type="entry name" value="AON_synthase_class-II"/>
</dbReference>
<dbReference type="InterPro" id="IPR004723">
    <property type="entry name" value="AONS_Archaea/Proteobacteria"/>
</dbReference>
<dbReference type="InterPro" id="IPR022834">
    <property type="entry name" value="AONS_Proteobacteria"/>
</dbReference>
<dbReference type="InterPro" id="IPR015424">
    <property type="entry name" value="PyrdxlP-dep_Trfase"/>
</dbReference>
<dbReference type="InterPro" id="IPR015421">
    <property type="entry name" value="PyrdxlP-dep_Trfase_major"/>
</dbReference>
<dbReference type="InterPro" id="IPR015422">
    <property type="entry name" value="PyrdxlP-dep_Trfase_small"/>
</dbReference>
<dbReference type="NCBIfam" id="TIGR00858">
    <property type="entry name" value="bioF"/>
    <property type="match status" value="1"/>
</dbReference>
<dbReference type="PANTHER" id="PTHR13693:SF100">
    <property type="entry name" value="8-AMINO-7-OXONONANOATE SYNTHASE"/>
    <property type="match status" value="1"/>
</dbReference>
<dbReference type="PANTHER" id="PTHR13693">
    <property type="entry name" value="CLASS II AMINOTRANSFERASE/8-AMINO-7-OXONONANOATE SYNTHASE"/>
    <property type="match status" value="1"/>
</dbReference>
<dbReference type="Pfam" id="PF00155">
    <property type="entry name" value="Aminotran_1_2"/>
    <property type="match status" value="1"/>
</dbReference>
<dbReference type="SUPFAM" id="SSF53383">
    <property type="entry name" value="PLP-dependent transferases"/>
    <property type="match status" value="1"/>
</dbReference>
<dbReference type="PROSITE" id="PS00599">
    <property type="entry name" value="AA_TRANSFER_CLASS_2"/>
    <property type="match status" value="1"/>
</dbReference>
<organism>
    <name type="scientific">Klebsiella pneumoniae subsp. pneumoniae (strain ATCC 700721 / MGH 78578)</name>
    <dbReference type="NCBI Taxonomy" id="272620"/>
    <lineage>
        <taxon>Bacteria</taxon>
        <taxon>Pseudomonadati</taxon>
        <taxon>Pseudomonadota</taxon>
        <taxon>Gammaproteobacteria</taxon>
        <taxon>Enterobacterales</taxon>
        <taxon>Enterobacteriaceae</taxon>
        <taxon>Klebsiella/Raoultella group</taxon>
        <taxon>Klebsiella</taxon>
        <taxon>Klebsiella pneumoniae complex</taxon>
    </lineage>
</organism>
<comment type="function">
    <text evidence="1">Catalyzes the decarboxylative condensation of pimeloyl-[acyl-carrier protein] and L-alanine to produce 8-amino-7-oxononanoate (AON), [acyl-carrier protein], and carbon dioxide.</text>
</comment>
<comment type="catalytic activity">
    <reaction evidence="1">
        <text>6-carboxyhexanoyl-[ACP] + L-alanine + H(+) = (8S)-8-amino-7-oxononanoate + holo-[ACP] + CO2</text>
        <dbReference type="Rhea" id="RHEA:42288"/>
        <dbReference type="Rhea" id="RHEA-COMP:9685"/>
        <dbReference type="Rhea" id="RHEA-COMP:9955"/>
        <dbReference type="ChEBI" id="CHEBI:15378"/>
        <dbReference type="ChEBI" id="CHEBI:16526"/>
        <dbReference type="ChEBI" id="CHEBI:57972"/>
        <dbReference type="ChEBI" id="CHEBI:64479"/>
        <dbReference type="ChEBI" id="CHEBI:78846"/>
        <dbReference type="ChEBI" id="CHEBI:149468"/>
        <dbReference type="EC" id="2.3.1.47"/>
    </reaction>
</comment>
<comment type="cofactor">
    <cofactor evidence="1">
        <name>pyridoxal 5'-phosphate</name>
        <dbReference type="ChEBI" id="CHEBI:597326"/>
    </cofactor>
</comment>
<comment type="pathway">
    <text evidence="1">Cofactor biosynthesis; biotin biosynthesis.</text>
</comment>
<comment type="subunit">
    <text evidence="1">Homodimer.</text>
</comment>
<comment type="similarity">
    <text evidence="1">Belongs to the class-II pyridoxal-phosphate-dependent aminotransferase family. BioF subfamily.</text>
</comment>
<accession>A6T6L6</accession>
<protein>
    <recommendedName>
        <fullName evidence="1">8-amino-7-oxononanoate synthase</fullName>
        <shortName evidence="1">AONS</shortName>
        <ecNumber evidence="1">2.3.1.47</ecNumber>
    </recommendedName>
    <alternativeName>
        <fullName evidence="1">7-keto-8-amino-pelargonic acid synthase</fullName>
        <shortName evidence="1">7-KAP synthase</shortName>
        <shortName evidence="1">KAPA synthase</shortName>
    </alternativeName>
    <alternativeName>
        <fullName evidence="1">8-amino-7-ketopelargonate synthase</fullName>
    </alternativeName>
</protein>
<proteinExistence type="inferred from homology"/>